<protein>
    <recommendedName>
        <fullName evidence="1">Glucokinase</fullName>
        <ecNumber evidence="1">2.7.1.2</ecNumber>
    </recommendedName>
    <alternativeName>
        <fullName evidence="1">Glucose kinase</fullName>
    </alternativeName>
</protein>
<name>GLK_SHIFL</name>
<sequence>MTKYALVGDVGGTNARLALCDIASGEISQAKTYSGLDYPSLEAVIRVYLEEHKVEVKDGCIAIACPITGDWVAMTNHTWAFSIAEMKKNLGFSHLEIINDFTAVSMAIPMLKKEHLIQFGGAEPVEGKPIAVYGAGTGLGVAHLVHVDKRWVSLPGEGGHVDFAPNSEEEAIILEILRAEIGHVSAERVLSGPGLVNLYRAIVKADNRLPENLKPKDITERALADSCTDCRRALSLFCVIMGRFGGNLALNLGTFGGVFIAGGIVPRFLEFFKASGFRAAFEDKGRFKEYVHDIPVYLIVHDYPGLLGSGAHLRQTLGHIL</sequence>
<gene>
    <name evidence="1" type="primary">glk</name>
    <name type="ordered locus">SF2454</name>
    <name type="ordered locus">S2593</name>
</gene>
<evidence type="ECO:0000255" key="1">
    <source>
        <dbReference type="HAMAP-Rule" id="MF_00524"/>
    </source>
</evidence>
<reference key="1">
    <citation type="journal article" date="2002" name="Nucleic Acids Res.">
        <title>Genome sequence of Shigella flexneri 2a: insights into pathogenicity through comparison with genomes of Escherichia coli K12 and O157.</title>
        <authorList>
            <person name="Jin Q."/>
            <person name="Yuan Z."/>
            <person name="Xu J."/>
            <person name="Wang Y."/>
            <person name="Shen Y."/>
            <person name="Lu W."/>
            <person name="Wang J."/>
            <person name="Liu H."/>
            <person name="Yang J."/>
            <person name="Yang F."/>
            <person name="Zhang X."/>
            <person name="Zhang J."/>
            <person name="Yang G."/>
            <person name="Wu H."/>
            <person name="Qu D."/>
            <person name="Dong J."/>
            <person name="Sun L."/>
            <person name="Xue Y."/>
            <person name="Zhao A."/>
            <person name="Gao Y."/>
            <person name="Zhu J."/>
            <person name="Kan B."/>
            <person name="Ding K."/>
            <person name="Chen S."/>
            <person name="Cheng H."/>
            <person name="Yao Z."/>
            <person name="He B."/>
            <person name="Chen R."/>
            <person name="Ma D."/>
            <person name="Qiang B."/>
            <person name="Wen Y."/>
            <person name="Hou Y."/>
            <person name="Yu J."/>
        </authorList>
    </citation>
    <scope>NUCLEOTIDE SEQUENCE [LARGE SCALE GENOMIC DNA]</scope>
    <source>
        <strain>301 / Serotype 2a</strain>
    </source>
</reference>
<reference key="2">
    <citation type="journal article" date="2003" name="Infect. Immun.">
        <title>Complete genome sequence and comparative genomics of Shigella flexneri serotype 2a strain 2457T.</title>
        <authorList>
            <person name="Wei J."/>
            <person name="Goldberg M.B."/>
            <person name="Burland V."/>
            <person name="Venkatesan M.M."/>
            <person name="Deng W."/>
            <person name="Fournier G."/>
            <person name="Mayhew G.F."/>
            <person name="Plunkett G. III"/>
            <person name="Rose D.J."/>
            <person name="Darling A."/>
            <person name="Mau B."/>
            <person name="Perna N.T."/>
            <person name="Payne S.M."/>
            <person name="Runyen-Janecky L.J."/>
            <person name="Zhou S."/>
            <person name="Schwartz D.C."/>
            <person name="Blattner F.R."/>
        </authorList>
    </citation>
    <scope>NUCLEOTIDE SEQUENCE [LARGE SCALE GENOMIC DNA]</scope>
    <source>
        <strain>ATCC 700930 / 2457T / Serotype 2a</strain>
    </source>
</reference>
<feature type="chain" id="PRO_0000215139" description="Glucokinase">
    <location>
        <begin position="1"/>
        <end position="321"/>
    </location>
</feature>
<feature type="binding site" evidence="1">
    <location>
        <begin position="8"/>
        <end position="13"/>
    </location>
    <ligand>
        <name>ATP</name>
        <dbReference type="ChEBI" id="CHEBI:30616"/>
    </ligand>
</feature>
<dbReference type="EC" id="2.7.1.2" evidence="1"/>
<dbReference type="EMBL" id="AE005674">
    <property type="protein sequence ID" value="AAN43962.1"/>
    <property type="molecule type" value="Genomic_DNA"/>
</dbReference>
<dbReference type="EMBL" id="AE014073">
    <property type="protein sequence ID" value="AAP17773.1"/>
    <property type="molecule type" value="Genomic_DNA"/>
</dbReference>
<dbReference type="RefSeq" id="NP_708255.1">
    <property type="nucleotide sequence ID" value="NC_004337.2"/>
</dbReference>
<dbReference type="RefSeq" id="WP_000170347.1">
    <property type="nucleotide sequence ID" value="NZ_WPGW01000027.1"/>
</dbReference>
<dbReference type="SMR" id="Q83K86"/>
<dbReference type="STRING" id="198214.SF2454"/>
<dbReference type="PaxDb" id="198214-SF2454"/>
<dbReference type="GeneID" id="1025571"/>
<dbReference type="KEGG" id="sfl:SF2454"/>
<dbReference type="KEGG" id="sfx:S2593"/>
<dbReference type="PATRIC" id="fig|198214.7.peg.2932"/>
<dbReference type="HOGENOM" id="CLU_042582_1_0_6"/>
<dbReference type="Proteomes" id="UP000001006">
    <property type="component" value="Chromosome"/>
</dbReference>
<dbReference type="Proteomes" id="UP000002673">
    <property type="component" value="Chromosome"/>
</dbReference>
<dbReference type="GO" id="GO:0005829">
    <property type="term" value="C:cytosol"/>
    <property type="evidence" value="ECO:0007669"/>
    <property type="project" value="TreeGrafter"/>
</dbReference>
<dbReference type="GO" id="GO:0005524">
    <property type="term" value="F:ATP binding"/>
    <property type="evidence" value="ECO:0007669"/>
    <property type="project" value="UniProtKB-UniRule"/>
</dbReference>
<dbReference type="GO" id="GO:0005536">
    <property type="term" value="F:D-glucose binding"/>
    <property type="evidence" value="ECO:0007669"/>
    <property type="project" value="InterPro"/>
</dbReference>
<dbReference type="GO" id="GO:0004340">
    <property type="term" value="F:glucokinase activity"/>
    <property type="evidence" value="ECO:0007669"/>
    <property type="project" value="UniProtKB-UniRule"/>
</dbReference>
<dbReference type="GO" id="GO:0006096">
    <property type="term" value="P:glycolytic process"/>
    <property type="evidence" value="ECO:0007669"/>
    <property type="project" value="UniProtKB-UniRule"/>
</dbReference>
<dbReference type="CDD" id="cd24008">
    <property type="entry name" value="ASKHA_NBD_GLK"/>
    <property type="match status" value="1"/>
</dbReference>
<dbReference type="FunFam" id="3.30.420.40:FF:000045">
    <property type="entry name" value="Glucokinase"/>
    <property type="match status" value="1"/>
</dbReference>
<dbReference type="FunFam" id="3.40.367.20:FF:000002">
    <property type="entry name" value="Glucokinase"/>
    <property type="match status" value="1"/>
</dbReference>
<dbReference type="Gene3D" id="3.30.420.40">
    <property type="match status" value="1"/>
</dbReference>
<dbReference type="Gene3D" id="3.40.367.20">
    <property type="match status" value="1"/>
</dbReference>
<dbReference type="HAMAP" id="MF_00524">
    <property type="entry name" value="Glucokinase"/>
    <property type="match status" value="1"/>
</dbReference>
<dbReference type="InterPro" id="IPR043129">
    <property type="entry name" value="ATPase_NBD"/>
</dbReference>
<dbReference type="InterPro" id="IPR050201">
    <property type="entry name" value="Bacterial_glucokinase"/>
</dbReference>
<dbReference type="InterPro" id="IPR003836">
    <property type="entry name" value="Glucokinase"/>
</dbReference>
<dbReference type="NCBIfam" id="TIGR00749">
    <property type="entry name" value="glk"/>
    <property type="match status" value="1"/>
</dbReference>
<dbReference type="NCBIfam" id="NF001414">
    <property type="entry name" value="PRK00292.1-1"/>
    <property type="match status" value="1"/>
</dbReference>
<dbReference type="NCBIfam" id="NF001416">
    <property type="entry name" value="PRK00292.1-3"/>
    <property type="match status" value="1"/>
</dbReference>
<dbReference type="PANTHER" id="PTHR47690">
    <property type="entry name" value="GLUCOKINASE"/>
    <property type="match status" value="1"/>
</dbReference>
<dbReference type="PANTHER" id="PTHR47690:SF1">
    <property type="entry name" value="GLUCOKINASE"/>
    <property type="match status" value="1"/>
</dbReference>
<dbReference type="Pfam" id="PF02685">
    <property type="entry name" value="Glucokinase"/>
    <property type="match status" value="1"/>
</dbReference>
<dbReference type="SUPFAM" id="SSF53067">
    <property type="entry name" value="Actin-like ATPase domain"/>
    <property type="match status" value="1"/>
</dbReference>
<comment type="catalytic activity">
    <reaction evidence="1">
        <text>D-glucose + ATP = D-glucose 6-phosphate + ADP + H(+)</text>
        <dbReference type="Rhea" id="RHEA:17825"/>
        <dbReference type="ChEBI" id="CHEBI:4167"/>
        <dbReference type="ChEBI" id="CHEBI:15378"/>
        <dbReference type="ChEBI" id="CHEBI:30616"/>
        <dbReference type="ChEBI" id="CHEBI:61548"/>
        <dbReference type="ChEBI" id="CHEBI:456216"/>
        <dbReference type="EC" id="2.7.1.2"/>
    </reaction>
</comment>
<comment type="subcellular location">
    <subcellularLocation>
        <location evidence="1">Cytoplasm</location>
    </subcellularLocation>
</comment>
<comment type="similarity">
    <text evidence="1">Belongs to the bacterial glucokinase family.</text>
</comment>
<organism>
    <name type="scientific">Shigella flexneri</name>
    <dbReference type="NCBI Taxonomy" id="623"/>
    <lineage>
        <taxon>Bacteria</taxon>
        <taxon>Pseudomonadati</taxon>
        <taxon>Pseudomonadota</taxon>
        <taxon>Gammaproteobacteria</taxon>
        <taxon>Enterobacterales</taxon>
        <taxon>Enterobacteriaceae</taxon>
        <taxon>Shigella</taxon>
    </lineage>
</organism>
<accession>Q83K86</accession>
<accession>Q7C0L2</accession>
<proteinExistence type="inferred from homology"/>
<keyword id="KW-0067">ATP-binding</keyword>
<keyword id="KW-0963">Cytoplasm</keyword>
<keyword id="KW-0324">Glycolysis</keyword>
<keyword id="KW-0418">Kinase</keyword>
<keyword id="KW-0547">Nucleotide-binding</keyword>
<keyword id="KW-1185">Reference proteome</keyword>
<keyword id="KW-0808">Transferase</keyword>